<comment type="function">
    <text evidence="1">Specifically interacts with bone sialoprotein (BSP), a glycoprotein of bone and dentin extracellular matrix. Could contribute to staphylococcal osteomyelitis and arthritis (By similarity).</text>
</comment>
<comment type="subcellular location">
    <subcellularLocation>
        <location evidence="3">Secreted</location>
        <location evidence="3">Cell wall</location>
        <topology evidence="3">Peptidoglycan-anchor</topology>
    </subcellularLocation>
</comment>
<comment type="similarity">
    <text evidence="5">Belongs to the serine-aspartate repeat-containing protein (SDr) family.</text>
</comment>
<feature type="signal peptide" evidence="2">
    <location>
        <begin position="1"/>
        <end position="52"/>
    </location>
</feature>
<feature type="chain" id="PRO_0000281169" description="Bone sialoprotein-binding protein">
    <location>
        <begin position="53"/>
        <end position="1103"/>
    </location>
</feature>
<feature type="propeptide" id="PRO_0000281170" description="Removed by sortase" evidence="3">
    <location>
        <begin position="1104"/>
        <end position="1137"/>
    </location>
</feature>
<feature type="domain" description="CNA-B 1">
    <location>
        <begin position="602"/>
        <end position="714"/>
    </location>
</feature>
<feature type="domain" description="CNA-B 2">
    <location>
        <begin position="715"/>
        <end position="824"/>
    </location>
</feature>
<feature type="domain" description="CNA-B 3">
    <location>
        <begin position="825"/>
        <end position="935"/>
    </location>
</feature>
<feature type="region of interest" description="Ligand binding A region">
    <location>
        <begin position="53"/>
        <end position="601"/>
    </location>
</feature>
<feature type="region of interest" description="Disordered" evidence="4">
    <location>
        <begin position="54"/>
        <end position="249"/>
    </location>
</feature>
<feature type="region of interest" description="Disordered" evidence="4">
    <location>
        <begin position="675"/>
        <end position="697"/>
    </location>
</feature>
<feature type="region of interest" description="Disordered" evidence="4">
    <location>
        <begin position="896"/>
        <end position="1112"/>
    </location>
</feature>
<feature type="short sequence motif" description="LPXTG sorting signal" evidence="3">
    <location>
        <begin position="1100"/>
        <end position="1104"/>
    </location>
</feature>
<feature type="compositionally biased region" description="Basic and acidic residues" evidence="4">
    <location>
        <begin position="61"/>
        <end position="75"/>
    </location>
</feature>
<feature type="compositionally biased region" description="Polar residues" evidence="4">
    <location>
        <begin position="77"/>
        <end position="89"/>
    </location>
</feature>
<feature type="compositionally biased region" description="Basic and acidic residues" evidence="4">
    <location>
        <begin position="92"/>
        <end position="106"/>
    </location>
</feature>
<feature type="compositionally biased region" description="Low complexity" evidence="4">
    <location>
        <begin position="109"/>
        <end position="126"/>
    </location>
</feature>
<feature type="compositionally biased region" description="Basic and acidic residues" evidence="4">
    <location>
        <begin position="130"/>
        <end position="145"/>
    </location>
</feature>
<feature type="compositionally biased region" description="Polar residues" evidence="4">
    <location>
        <begin position="158"/>
        <end position="207"/>
    </location>
</feature>
<feature type="compositionally biased region" description="Basic and acidic residues" evidence="4">
    <location>
        <begin position="216"/>
        <end position="241"/>
    </location>
</feature>
<feature type="compositionally biased region" description="Acidic residues" evidence="4">
    <location>
        <begin position="903"/>
        <end position="913"/>
    </location>
</feature>
<feature type="compositionally biased region" description="Acidic residues" evidence="4">
    <location>
        <begin position="930"/>
        <end position="1076"/>
    </location>
</feature>
<feature type="modified residue" description="Pentaglycyl murein peptidoglycan amidated threonine" evidence="3">
    <location>
        <position position="1103"/>
    </location>
</feature>
<reference key="1">
    <citation type="journal article" date="2004" name="Proc. Natl. Acad. Sci. U.S.A.">
        <title>Complete genomes of two clinical Staphylococcus aureus strains: evidence for the rapid evolution of virulence and drug resistance.</title>
        <authorList>
            <person name="Holden M.T.G."/>
            <person name="Feil E.J."/>
            <person name="Lindsay J.A."/>
            <person name="Peacock S.J."/>
            <person name="Day N.P.J."/>
            <person name="Enright M.C."/>
            <person name="Foster T.J."/>
            <person name="Moore C.E."/>
            <person name="Hurst L."/>
            <person name="Atkin R."/>
            <person name="Barron A."/>
            <person name="Bason N."/>
            <person name="Bentley S.D."/>
            <person name="Chillingworth C."/>
            <person name="Chillingworth T."/>
            <person name="Churcher C."/>
            <person name="Clark L."/>
            <person name="Corton C."/>
            <person name="Cronin A."/>
            <person name="Doggett J."/>
            <person name="Dowd L."/>
            <person name="Feltwell T."/>
            <person name="Hance Z."/>
            <person name="Harris B."/>
            <person name="Hauser H."/>
            <person name="Holroyd S."/>
            <person name="Jagels K."/>
            <person name="James K.D."/>
            <person name="Lennard N."/>
            <person name="Line A."/>
            <person name="Mayes R."/>
            <person name="Moule S."/>
            <person name="Mungall K."/>
            <person name="Ormond D."/>
            <person name="Quail M.A."/>
            <person name="Rabbinowitsch E."/>
            <person name="Rutherford K.M."/>
            <person name="Sanders M."/>
            <person name="Sharp S."/>
            <person name="Simmonds M."/>
            <person name="Stevens K."/>
            <person name="Whitehead S."/>
            <person name="Barrell B.G."/>
            <person name="Spratt B.G."/>
            <person name="Parkhill J."/>
        </authorList>
    </citation>
    <scope>NUCLEOTIDE SEQUENCE [LARGE SCALE GENOMIC DNA]</scope>
    <source>
        <strain>MRSA252</strain>
    </source>
</reference>
<proteinExistence type="inferred from homology"/>
<dbReference type="EMBL" id="BX571856">
    <property type="protein sequence ID" value="CAG39588.1"/>
    <property type="molecule type" value="Genomic_DNA"/>
</dbReference>
<dbReference type="SMR" id="Q6GJA6"/>
<dbReference type="KEGG" id="sar:SAR0567"/>
<dbReference type="HOGENOM" id="CLU_004137_1_1_9"/>
<dbReference type="Proteomes" id="UP000000596">
    <property type="component" value="Chromosome"/>
</dbReference>
<dbReference type="GO" id="GO:0005576">
    <property type="term" value="C:extracellular region"/>
    <property type="evidence" value="ECO:0007669"/>
    <property type="project" value="UniProtKB-KW"/>
</dbReference>
<dbReference type="GO" id="GO:0007155">
    <property type="term" value="P:cell adhesion"/>
    <property type="evidence" value="ECO:0007669"/>
    <property type="project" value="InterPro"/>
</dbReference>
<dbReference type="Gene3D" id="2.60.40.1280">
    <property type="match status" value="1"/>
</dbReference>
<dbReference type="Gene3D" id="2.60.40.1290">
    <property type="match status" value="1"/>
</dbReference>
<dbReference type="Gene3D" id="2.60.40.10">
    <property type="entry name" value="Immunoglobulins"/>
    <property type="match status" value="3"/>
</dbReference>
<dbReference type="InterPro" id="IPR011266">
    <property type="entry name" value="Adhesin_Fg-bd_dom_2"/>
</dbReference>
<dbReference type="InterPro" id="IPR008966">
    <property type="entry name" value="Adhesion_dom_sf"/>
</dbReference>
<dbReference type="InterPro" id="IPR011252">
    <property type="entry name" value="Fibrogen-bd_dom1"/>
</dbReference>
<dbReference type="InterPro" id="IPR013783">
    <property type="entry name" value="Ig-like_fold"/>
</dbReference>
<dbReference type="InterPro" id="IPR019931">
    <property type="entry name" value="LPXTG_anchor"/>
</dbReference>
<dbReference type="InterPro" id="IPR050972">
    <property type="entry name" value="SDr-like"/>
</dbReference>
<dbReference type="InterPro" id="IPR033764">
    <property type="entry name" value="Sdr_B"/>
</dbReference>
<dbReference type="InterPro" id="IPR041171">
    <property type="entry name" value="SDR_Ig"/>
</dbReference>
<dbReference type="InterPro" id="IPR005877">
    <property type="entry name" value="YSIRK_signal_dom"/>
</dbReference>
<dbReference type="NCBIfam" id="TIGR01167">
    <property type="entry name" value="LPXTG_anchor"/>
    <property type="match status" value="1"/>
</dbReference>
<dbReference type="NCBIfam" id="TIGR01168">
    <property type="entry name" value="YSIRK_signal"/>
    <property type="match status" value="1"/>
</dbReference>
<dbReference type="PANTHER" id="PTHR34403">
    <property type="entry name" value="TOL-PAL SYSTEM PROTEIN TOLA"/>
    <property type="match status" value="1"/>
</dbReference>
<dbReference type="PANTHER" id="PTHR34403:SF8">
    <property type="entry name" value="TOL-PAL SYSTEM PROTEIN TOLA"/>
    <property type="match status" value="1"/>
</dbReference>
<dbReference type="Pfam" id="PF17961">
    <property type="entry name" value="Big_8"/>
    <property type="match status" value="1"/>
</dbReference>
<dbReference type="Pfam" id="PF00746">
    <property type="entry name" value="Gram_pos_anchor"/>
    <property type="match status" value="1"/>
</dbReference>
<dbReference type="Pfam" id="PF17210">
    <property type="entry name" value="SdrD_B"/>
    <property type="match status" value="3"/>
</dbReference>
<dbReference type="Pfam" id="PF10425">
    <property type="entry name" value="SdrG_C_C"/>
    <property type="match status" value="1"/>
</dbReference>
<dbReference type="Pfam" id="PF04650">
    <property type="entry name" value="YSIRK_signal"/>
    <property type="match status" value="1"/>
</dbReference>
<dbReference type="SUPFAM" id="SSF49401">
    <property type="entry name" value="Bacterial adhesins"/>
    <property type="match status" value="2"/>
</dbReference>
<dbReference type="SUPFAM" id="SSF117074">
    <property type="entry name" value="Hypothetical protein PA1324"/>
    <property type="match status" value="3"/>
</dbReference>
<dbReference type="PROSITE" id="PS50847">
    <property type="entry name" value="GRAM_POS_ANCHORING"/>
    <property type="match status" value="1"/>
</dbReference>
<gene>
    <name type="primary">bbp</name>
    <name type="ordered locus">SAR0567</name>
</gene>
<organism>
    <name type="scientific">Staphylococcus aureus (strain MRSA252)</name>
    <dbReference type="NCBI Taxonomy" id="282458"/>
    <lineage>
        <taxon>Bacteria</taxon>
        <taxon>Bacillati</taxon>
        <taxon>Bacillota</taxon>
        <taxon>Bacilli</taxon>
        <taxon>Bacillales</taxon>
        <taxon>Staphylococcaceae</taxon>
        <taxon>Staphylococcus</taxon>
    </lineage>
</organism>
<protein>
    <recommendedName>
        <fullName>Bone sialoprotein-binding protein</fullName>
        <shortName>BSP-binding protein</shortName>
    </recommendedName>
</protein>
<name>BBP_STAAR</name>
<sequence>MINRDNKKAITKKGMISNRLNKFSIRKYTVGTASILVGTTLIFGLGNQEAKAAENTSTENAKQDEASASDNKEVVSETENNSTQKNDLTNPIKKETNTDSHQEAKEAPTTSSTQQQQNNATTSTETKPQNIEKENVKPSTDKTATEDTSVILEEKKAPNNTNNDVTTKPSTSEIQTTPTTPQESTNIENSQPQPTPSKVDNQVTDATNPKEPVNVSKEELKNNPEKLKELVRNDSNTDRSTKPVATAPTSVAPKRVNAKIRFAVAQPAAVASNNVNDLITVTKQMITEGIKDDGVIQAHDGEHIIYTSDFKIDNAVKAGDTMTVKYDKHTIPSDITDDFTPVDITDPSGEVIAKGTFDLNTKTITYKFTDYVDRYENVNAKLELNSYIDKKEVPNETNLNLTFATADKETSKNVKVEYQKPIVKDESNIQSIFSHLDTTKHEVEQTIYVNPLKLNAKNTNVTIKSGGVADNGDYYTGDGSTIIDSNTEIKVYKVASGQQLPQSNKIYDYSQYEDVTNSVTINKNYGTNMANINFGDIDSAYIVKVVSKYTPGAEDDLAVQQGVRMTTTNKYNYSSYAGYTNTILSTTDSGGGDGTVKPEEKLYKIGDYVWEDVDKDGVQGTDSKEKPMANVLVTLTYPDGTTKSVRTDANGHYEFGGLKDGETYTVKFETPAGYLPTKENGTTDGEKDSNGSSVTVKINGKDDMSLDTGFYKEPKYNLGDYVWEDTNKDGIQDANEPGIKDVKVTLKDSTGKVIGTTTTDASGKYKFTDLDNGNYTVEFETPAGYTPTVKNTTAEDKDSNGLTTTGVIKDADNWTLDSGFYKTPKYSLGDYVWYDSNKDGKQDSTEKGIKDVTVTLQNEKGEVIGTTKTDENGKYHFDNLDSGKYKVIFEKPAGLTQTGTNTTEDDKDADGGEVDVTITDHDDFTLDNGYFEEDTSDSDSDSDSDSDSDSDSDSDSDSDSDSDSDSDSDSDSDSDSDSDSDSDSDSDSDSDSDSDSDSDSDSDSDSDSDSDSDSDSDSDSDSDSDSDSDSDSDSDSDSDSDSDSDSDSDSDSDSDSDSDSDSDSDSDSDSDSDSDSDAGKHTPVKPMSATKDHHNKAKALPETGSENNGSNNATLFGGLFAALGSLLLFGRRKKQNK</sequence>
<evidence type="ECO:0000250" key="1"/>
<evidence type="ECO:0000255" key="2"/>
<evidence type="ECO:0000255" key="3">
    <source>
        <dbReference type="PROSITE-ProRule" id="PRU00477"/>
    </source>
</evidence>
<evidence type="ECO:0000256" key="4">
    <source>
        <dbReference type="SAM" id="MobiDB-lite"/>
    </source>
</evidence>
<evidence type="ECO:0000305" key="5"/>
<accession>Q6GJA6</accession>
<keyword id="KW-0134">Cell wall</keyword>
<keyword id="KW-0572">Peptidoglycan-anchor</keyword>
<keyword id="KW-0677">Repeat</keyword>
<keyword id="KW-0964">Secreted</keyword>
<keyword id="KW-0732">Signal</keyword>
<keyword id="KW-0843">Virulence</keyword>